<evidence type="ECO:0000255" key="1">
    <source>
        <dbReference type="HAMAP-Rule" id="MF_01232"/>
    </source>
</evidence>
<evidence type="ECO:0000256" key="2">
    <source>
        <dbReference type="SAM" id="MobiDB-lite"/>
    </source>
</evidence>
<comment type="similarity">
    <text evidence="1">Belongs to the UPF0229 family.</text>
</comment>
<protein>
    <recommendedName>
        <fullName evidence="1">UPF0229 protein LPC_3097</fullName>
    </recommendedName>
</protein>
<organism>
    <name type="scientific">Legionella pneumophila (strain Corby)</name>
    <dbReference type="NCBI Taxonomy" id="400673"/>
    <lineage>
        <taxon>Bacteria</taxon>
        <taxon>Pseudomonadati</taxon>
        <taxon>Pseudomonadota</taxon>
        <taxon>Gammaproteobacteria</taxon>
        <taxon>Legionellales</taxon>
        <taxon>Legionellaceae</taxon>
        <taxon>Legionella</taxon>
    </lineage>
</organism>
<accession>A5IHY4</accession>
<reference key="1">
    <citation type="submission" date="2006-11" db="EMBL/GenBank/DDBJ databases">
        <title>Identification and characterization of a new conjugation/ type IVA secretion system (trb/tra) of L. pneumophila Corby localized on a mobile genomic island.</title>
        <authorList>
            <person name="Gloeckner G."/>
            <person name="Albert-Weissenberger C."/>
            <person name="Weinmann E."/>
            <person name="Jacobi S."/>
            <person name="Schunder E."/>
            <person name="Steinert M."/>
            <person name="Buchrieser C."/>
            <person name="Hacker J."/>
            <person name="Heuner K."/>
        </authorList>
    </citation>
    <scope>NUCLEOTIDE SEQUENCE [LARGE SCALE GENOMIC DNA]</scope>
    <source>
        <strain>Corby</strain>
    </source>
</reference>
<feature type="chain" id="PRO_1000066863" description="UPF0229 protein LPC_3097">
    <location>
        <begin position="1"/>
        <end position="420"/>
    </location>
</feature>
<feature type="region of interest" description="Disordered" evidence="2">
    <location>
        <begin position="83"/>
        <end position="107"/>
    </location>
</feature>
<feature type="compositionally biased region" description="Gly residues" evidence="2">
    <location>
        <begin position="91"/>
        <end position="100"/>
    </location>
</feature>
<name>Y3097_LEGPC</name>
<proteinExistence type="inferred from homology"/>
<gene>
    <name type="ordered locus">LPC_3097</name>
</gene>
<dbReference type="EMBL" id="CP000675">
    <property type="protein sequence ID" value="ABQ56984.1"/>
    <property type="molecule type" value="Genomic_DNA"/>
</dbReference>
<dbReference type="RefSeq" id="WP_011947696.1">
    <property type="nucleotide sequence ID" value="NC_009494.2"/>
</dbReference>
<dbReference type="SMR" id="A5IHY4"/>
<dbReference type="KEGG" id="lpc:LPC_3097"/>
<dbReference type="HOGENOM" id="CLU_049702_0_0_6"/>
<dbReference type="HAMAP" id="MF_01232">
    <property type="entry name" value="UPF0229"/>
    <property type="match status" value="1"/>
</dbReference>
<dbReference type="InterPro" id="IPR006698">
    <property type="entry name" value="UPF0229"/>
</dbReference>
<dbReference type="InterPro" id="IPR036465">
    <property type="entry name" value="vWFA_dom_sf"/>
</dbReference>
<dbReference type="NCBIfam" id="NF003707">
    <property type="entry name" value="PRK05325.1-2"/>
    <property type="match status" value="1"/>
</dbReference>
<dbReference type="NCBIfam" id="NF003708">
    <property type="entry name" value="PRK05325.1-3"/>
    <property type="match status" value="1"/>
</dbReference>
<dbReference type="PANTHER" id="PTHR30510">
    <property type="entry name" value="UPF0229 PROTEIN YEAH"/>
    <property type="match status" value="1"/>
</dbReference>
<dbReference type="PANTHER" id="PTHR30510:SF2">
    <property type="entry name" value="UPF0229 PROTEIN YEAH"/>
    <property type="match status" value="1"/>
</dbReference>
<dbReference type="Pfam" id="PF04285">
    <property type="entry name" value="DUF444"/>
    <property type="match status" value="1"/>
</dbReference>
<dbReference type="SUPFAM" id="SSF53300">
    <property type="entry name" value="vWA-like"/>
    <property type="match status" value="1"/>
</dbReference>
<sequence length="420" mass="48461">MSQLIDRRQNAGKKSTVNRQRFLRRYKSQIKKAVSEAVGKRSITEIDQGEQITIPAKDIYEPQFHRGHGGHIERVLPGNDNFIAGDRIKRPGGGAGGAGGNASDSGEGEDNFVFELSREEFLELYFEDLELPDLVKKELARISTYKTVRAGVTTSGIPNNINVLRSMKQATGRRVALASPYKKRLKEAEEELERLKQLTNPDKIDLLKLERDIEFFKKKIQTVPFIDTIDLRYNHRVRVPSPSTQAVMFCVMDVSGSMDEAKKDIAKRFFILLYMFLTKNYEKIELVFIRHHTSAKEVNEEEFFYSRETGGTVVSSALELLNTIIEARYPPQAWNIYVAQASDGDNWNADSPYCQELLQEKIMPLLQYFAYIEIMPRHHQSLWEVYQQVKERYPNFAMENIDNVADIYPVFRELFKRKTV</sequence>